<gene>
    <name type="ordered locus">PLES_20821</name>
</gene>
<protein>
    <recommendedName>
        <fullName evidence="1">UPF0434 protein PLES_20821</fullName>
    </recommendedName>
</protein>
<dbReference type="EMBL" id="FM209186">
    <property type="protein sequence ID" value="CAW26809.1"/>
    <property type="molecule type" value="Genomic_DNA"/>
</dbReference>
<dbReference type="RefSeq" id="WP_003091157.1">
    <property type="nucleotide sequence ID" value="NC_011770.1"/>
</dbReference>
<dbReference type="SMR" id="B7V148"/>
<dbReference type="KEGG" id="pag:PLES_20821"/>
<dbReference type="HOGENOM" id="CLU_155659_2_2_6"/>
<dbReference type="GO" id="GO:0005829">
    <property type="term" value="C:cytosol"/>
    <property type="evidence" value="ECO:0007669"/>
    <property type="project" value="TreeGrafter"/>
</dbReference>
<dbReference type="FunFam" id="2.20.25.10:FF:000002">
    <property type="entry name" value="UPF0434 protein YcaR"/>
    <property type="match status" value="1"/>
</dbReference>
<dbReference type="Gene3D" id="2.20.25.10">
    <property type="match status" value="1"/>
</dbReference>
<dbReference type="HAMAP" id="MF_01187">
    <property type="entry name" value="UPF0434"/>
    <property type="match status" value="1"/>
</dbReference>
<dbReference type="InterPro" id="IPR005651">
    <property type="entry name" value="Trm112-like"/>
</dbReference>
<dbReference type="PANTHER" id="PTHR33505:SF4">
    <property type="entry name" value="PROTEIN PREY, MITOCHONDRIAL"/>
    <property type="match status" value="1"/>
</dbReference>
<dbReference type="PANTHER" id="PTHR33505">
    <property type="entry name" value="ZGC:162634"/>
    <property type="match status" value="1"/>
</dbReference>
<dbReference type="Pfam" id="PF03966">
    <property type="entry name" value="Trm112p"/>
    <property type="match status" value="1"/>
</dbReference>
<dbReference type="SUPFAM" id="SSF158997">
    <property type="entry name" value="Trm112p-like"/>
    <property type="match status" value="1"/>
</dbReference>
<comment type="similarity">
    <text evidence="1">Belongs to the UPF0434 family.</text>
</comment>
<accession>B7V148</accession>
<name>Y2082_PSEA8</name>
<proteinExistence type="inferred from homology"/>
<evidence type="ECO:0000255" key="1">
    <source>
        <dbReference type="HAMAP-Rule" id="MF_01187"/>
    </source>
</evidence>
<sequence>MDPKLLDILACPLTKGPLVLSEDKTELISKQAGLAYPIRDGIPVMLESEARSLNVDERLDK</sequence>
<organism>
    <name type="scientific">Pseudomonas aeruginosa (strain LESB58)</name>
    <dbReference type="NCBI Taxonomy" id="557722"/>
    <lineage>
        <taxon>Bacteria</taxon>
        <taxon>Pseudomonadati</taxon>
        <taxon>Pseudomonadota</taxon>
        <taxon>Gammaproteobacteria</taxon>
        <taxon>Pseudomonadales</taxon>
        <taxon>Pseudomonadaceae</taxon>
        <taxon>Pseudomonas</taxon>
    </lineage>
</organism>
<feature type="chain" id="PRO_1000138321" description="UPF0434 protein PLES_20821">
    <location>
        <begin position="1"/>
        <end position="61"/>
    </location>
</feature>
<reference key="1">
    <citation type="journal article" date="2009" name="Genome Res.">
        <title>Newly introduced genomic prophage islands are critical determinants of in vivo competitiveness in the Liverpool epidemic strain of Pseudomonas aeruginosa.</title>
        <authorList>
            <person name="Winstanley C."/>
            <person name="Langille M.G.I."/>
            <person name="Fothergill J.L."/>
            <person name="Kukavica-Ibrulj I."/>
            <person name="Paradis-Bleau C."/>
            <person name="Sanschagrin F."/>
            <person name="Thomson N.R."/>
            <person name="Winsor G.L."/>
            <person name="Quail M.A."/>
            <person name="Lennard N."/>
            <person name="Bignell A."/>
            <person name="Clarke L."/>
            <person name="Seeger K."/>
            <person name="Saunders D."/>
            <person name="Harris D."/>
            <person name="Parkhill J."/>
            <person name="Hancock R.E.W."/>
            <person name="Brinkman F.S.L."/>
            <person name="Levesque R.C."/>
        </authorList>
    </citation>
    <scope>NUCLEOTIDE SEQUENCE [LARGE SCALE GENOMIC DNA]</scope>
    <source>
        <strain>LESB58</strain>
    </source>
</reference>